<organism>
    <name type="scientific">Clostridium botulinum (strain Okra / Type B1)</name>
    <dbReference type="NCBI Taxonomy" id="498213"/>
    <lineage>
        <taxon>Bacteria</taxon>
        <taxon>Bacillati</taxon>
        <taxon>Bacillota</taxon>
        <taxon>Clostridia</taxon>
        <taxon>Eubacteriales</taxon>
        <taxon>Clostridiaceae</taxon>
        <taxon>Clostridium</taxon>
    </lineage>
</organism>
<comment type="function">
    <text evidence="1">Plays an essential role in the initiation and regulation of chromosomal replication. ATP-DnaA binds to the origin of replication (oriC) to initiate formation of the DNA replication initiation complex once per cell cycle. Binds the DnaA box (a 9 base pair repeat at the origin) and separates the double-stranded (ds)DNA. Forms a right-handed helical filament on oriC DNA; dsDNA binds to the exterior of the filament while single-stranded (ss)DNA is stabiized in the filament's interior. The ATP-DnaA-oriC complex binds and stabilizes one strand of the AT-rich DNA unwinding element (DUE), permitting loading of DNA polymerase. After initiation quickly degrades to an ADP-DnaA complex that is not apt for DNA replication. Binds acidic phospholipids.</text>
</comment>
<comment type="subunit">
    <text evidence="1">Oligomerizes as a right-handed, spiral filament on DNA at oriC.</text>
</comment>
<comment type="subcellular location">
    <subcellularLocation>
        <location evidence="1">Cytoplasm</location>
    </subcellularLocation>
</comment>
<comment type="domain">
    <text evidence="1">Domain I is involved in oligomerization and binding regulators, domain II is flexibile and of varying length in different bacteria, domain III forms the AAA+ region, while domain IV binds dsDNA.</text>
</comment>
<comment type="similarity">
    <text evidence="1">Belongs to the DnaA family.</text>
</comment>
<keyword id="KW-0067">ATP-binding</keyword>
<keyword id="KW-0963">Cytoplasm</keyword>
<keyword id="KW-0235">DNA replication</keyword>
<keyword id="KW-0238">DNA-binding</keyword>
<keyword id="KW-0446">Lipid-binding</keyword>
<keyword id="KW-0547">Nucleotide-binding</keyword>
<accession>B1IDU3</accession>
<dbReference type="EMBL" id="CP000939">
    <property type="protein sequence ID" value="ACA45199.1"/>
    <property type="molecule type" value="Genomic_DNA"/>
</dbReference>
<dbReference type="RefSeq" id="WP_003359462.1">
    <property type="nucleotide sequence ID" value="NC_010516.1"/>
</dbReference>
<dbReference type="SMR" id="B1IDU3"/>
<dbReference type="KEGG" id="cbb:CLD_0825"/>
<dbReference type="HOGENOM" id="CLU_026910_3_1_9"/>
<dbReference type="Proteomes" id="UP000008541">
    <property type="component" value="Chromosome"/>
</dbReference>
<dbReference type="GO" id="GO:0005737">
    <property type="term" value="C:cytoplasm"/>
    <property type="evidence" value="ECO:0007669"/>
    <property type="project" value="UniProtKB-SubCell"/>
</dbReference>
<dbReference type="GO" id="GO:0005886">
    <property type="term" value="C:plasma membrane"/>
    <property type="evidence" value="ECO:0007669"/>
    <property type="project" value="TreeGrafter"/>
</dbReference>
<dbReference type="GO" id="GO:0005524">
    <property type="term" value="F:ATP binding"/>
    <property type="evidence" value="ECO:0007669"/>
    <property type="project" value="UniProtKB-UniRule"/>
</dbReference>
<dbReference type="GO" id="GO:0016887">
    <property type="term" value="F:ATP hydrolysis activity"/>
    <property type="evidence" value="ECO:0007669"/>
    <property type="project" value="InterPro"/>
</dbReference>
<dbReference type="GO" id="GO:0003688">
    <property type="term" value="F:DNA replication origin binding"/>
    <property type="evidence" value="ECO:0007669"/>
    <property type="project" value="UniProtKB-UniRule"/>
</dbReference>
<dbReference type="GO" id="GO:0008289">
    <property type="term" value="F:lipid binding"/>
    <property type="evidence" value="ECO:0007669"/>
    <property type="project" value="UniProtKB-KW"/>
</dbReference>
<dbReference type="GO" id="GO:0006270">
    <property type="term" value="P:DNA replication initiation"/>
    <property type="evidence" value="ECO:0007669"/>
    <property type="project" value="UniProtKB-UniRule"/>
</dbReference>
<dbReference type="GO" id="GO:0006275">
    <property type="term" value="P:regulation of DNA replication"/>
    <property type="evidence" value="ECO:0007669"/>
    <property type="project" value="UniProtKB-UniRule"/>
</dbReference>
<dbReference type="CDD" id="cd00009">
    <property type="entry name" value="AAA"/>
    <property type="match status" value="1"/>
</dbReference>
<dbReference type="CDD" id="cd06571">
    <property type="entry name" value="Bac_DnaA_C"/>
    <property type="match status" value="1"/>
</dbReference>
<dbReference type="FunFam" id="1.10.1750.10:FF:000003">
    <property type="entry name" value="Chromosomal replication initiator protein DnaA"/>
    <property type="match status" value="1"/>
</dbReference>
<dbReference type="FunFam" id="1.10.8.60:FF:000003">
    <property type="entry name" value="Chromosomal replication initiator protein DnaA"/>
    <property type="match status" value="1"/>
</dbReference>
<dbReference type="FunFam" id="3.40.50.300:FF:000150">
    <property type="entry name" value="Chromosomal replication initiator protein DnaA"/>
    <property type="match status" value="1"/>
</dbReference>
<dbReference type="Gene3D" id="1.10.1750.10">
    <property type="match status" value="1"/>
</dbReference>
<dbReference type="Gene3D" id="1.10.8.60">
    <property type="match status" value="1"/>
</dbReference>
<dbReference type="Gene3D" id="3.30.300.180">
    <property type="match status" value="1"/>
</dbReference>
<dbReference type="Gene3D" id="3.40.50.300">
    <property type="entry name" value="P-loop containing nucleotide triphosphate hydrolases"/>
    <property type="match status" value="1"/>
</dbReference>
<dbReference type="HAMAP" id="MF_00377">
    <property type="entry name" value="DnaA_bact"/>
    <property type="match status" value="1"/>
</dbReference>
<dbReference type="InterPro" id="IPR003593">
    <property type="entry name" value="AAA+_ATPase"/>
</dbReference>
<dbReference type="InterPro" id="IPR001957">
    <property type="entry name" value="Chromosome_initiator_DnaA"/>
</dbReference>
<dbReference type="InterPro" id="IPR020591">
    <property type="entry name" value="Chromosome_initiator_DnaA-like"/>
</dbReference>
<dbReference type="InterPro" id="IPR018312">
    <property type="entry name" value="Chromosome_initiator_DnaA_CS"/>
</dbReference>
<dbReference type="InterPro" id="IPR013159">
    <property type="entry name" value="DnaA_C"/>
</dbReference>
<dbReference type="InterPro" id="IPR013317">
    <property type="entry name" value="DnaA_dom"/>
</dbReference>
<dbReference type="InterPro" id="IPR024633">
    <property type="entry name" value="DnaA_N_dom"/>
</dbReference>
<dbReference type="InterPro" id="IPR038454">
    <property type="entry name" value="DnaA_N_sf"/>
</dbReference>
<dbReference type="InterPro" id="IPR027417">
    <property type="entry name" value="P-loop_NTPase"/>
</dbReference>
<dbReference type="InterPro" id="IPR010921">
    <property type="entry name" value="Trp_repressor/repl_initiator"/>
</dbReference>
<dbReference type="NCBIfam" id="TIGR00362">
    <property type="entry name" value="DnaA"/>
    <property type="match status" value="1"/>
</dbReference>
<dbReference type="NCBIfam" id="NF010686">
    <property type="entry name" value="PRK14086.1"/>
    <property type="match status" value="1"/>
</dbReference>
<dbReference type="PANTHER" id="PTHR30050">
    <property type="entry name" value="CHROMOSOMAL REPLICATION INITIATOR PROTEIN DNAA"/>
    <property type="match status" value="1"/>
</dbReference>
<dbReference type="PANTHER" id="PTHR30050:SF2">
    <property type="entry name" value="CHROMOSOMAL REPLICATION INITIATOR PROTEIN DNAA"/>
    <property type="match status" value="1"/>
</dbReference>
<dbReference type="Pfam" id="PF00308">
    <property type="entry name" value="Bac_DnaA"/>
    <property type="match status" value="1"/>
</dbReference>
<dbReference type="Pfam" id="PF08299">
    <property type="entry name" value="Bac_DnaA_C"/>
    <property type="match status" value="1"/>
</dbReference>
<dbReference type="Pfam" id="PF11638">
    <property type="entry name" value="DnaA_N"/>
    <property type="match status" value="1"/>
</dbReference>
<dbReference type="PRINTS" id="PR00051">
    <property type="entry name" value="DNAA"/>
</dbReference>
<dbReference type="SMART" id="SM00382">
    <property type="entry name" value="AAA"/>
    <property type="match status" value="1"/>
</dbReference>
<dbReference type="SMART" id="SM00760">
    <property type="entry name" value="Bac_DnaA_C"/>
    <property type="match status" value="1"/>
</dbReference>
<dbReference type="SUPFAM" id="SSF52540">
    <property type="entry name" value="P-loop containing nucleoside triphosphate hydrolases"/>
    <property type="match status" value="1"/>
</dbReference>
<dbReference type="SUPFAM" id="SSF48295">
    <property type="entry name" value="TrpR-like"/>
    <property type="match status" value="1"/>
</dbReference>
<dbReference type="PROSITE" id="PS01008">
    <property type="entry name" value="DNAA"/>
    <property type="match status" value="1"/>
</dbReference>
<sequence>MSTHLTETWEKAINIIKGELTEVSFNTWIKSINPISLENNSLKLAVPNDFTKGILESRYKDLIVNALKLLTSKKYNIDFIVTTEEKIEKNHNNEKSNIVVNDEMSTMLNPKYTFDSFVIGNSNRFAHAASLAVAESPAKAYNPLFIYGGVGLGKTHLMHAIGHYILHNNPKSQVVYVSSEKFTNELINSIKDDKNVEFRNKYRNIDILLVDDIQFIAGKERTQEEFFHTFNALYEANKQIIISSDRPPKEIPTLEDRLRSRFEWGLIADIQAPDFETRMAILKKKADVEKLNIPNEVMVYIATKIKSNIRELEGALIRIVAFSSLTNKEISVDLASEALKDIISSKQTRQVTIDIIQEVVANYYNLKIEDLKSARRTRNIAFPRQIAMYLSRKLTDMSLPKIGEEFGGRDHTTVIHAYEKISNNLKKDESLQNAIKELNKRINQK</sequence>
<reference key="1">
    <citation type="journal article" date="2007" name="PLoS ONE">
        <title>Analysis of the neurotoxin complex genes in Clostridium botulinum A1-A4 and B1 strains: BoNT/A3, /Ba4 and /B1 clusters are located within plasmids.</title>
        <authorList>
            <person name="Smith T.J."/>
            <person name="Hill K.K."/>
            <person name="Foley B.T."/>
            <person name="Detter J.C."/>
            <person name="Munk A.C."/>
            <person name="Bruce D.C."/>
            <person name="Doggett N.A."/>
            <person name="Smith L.A."/>
            <person name="Marks J.D."/>
            <person name="Xie G."/>
            <person name="Brettin T.S."/>
        </authorList>
    </citation>
    <scope>NUCLEOTIDE SEQUENCE [LARGE SCALE GENOMIC DNA]</scope>
    <source>
        <strain>Okra / Type B1</strain>
    </source>
</reference>
<gene>
    <name evidence="1" type="primary">dnaA</name>
    <name type="ordered locus">CLD_0825</name>
</gene>
<evidence type="ECO:0000255" key="1">
    <source>
        <dbReference type="HAMAP-Rule" id="MF_00377"/>
    </source>
</evidence>
<feature type="chain" id="PRO_1000121963" description="Chromosomal replication initiator protein DnaA">
    <location>
        <begin position="1"/>
        <end position="445"/>
    </location>
</feature>
<feature type="region of interest" description="Domain I, interacts with DnaA modulators" evidence="1">
    <location>
        <begin position="1"/>
        <end position="73"/>
    </location>
</feature>
<feature type="region of interest" description="Domain II" evidence="1">
    <location>
        <begin position="73"/>
        <end position="106"/>
    </location>
</feature>
<feature type="region of interest" description="Domain III, AAA+ region" evidence="1">
    <location>
        <begin position="107"/>
        <end position="323"/>
    </location>
</feature>
<feature type="region of interest" description="Domain IV, binds dsDNA" evidence="1">
    <location>
        <begin position="324"/>
        <end position="445"/>
    </location>
</feature>
<feature type="binding site" evidence="1">
    <location>
        <position position="151"/>
    </location>
    <ligand>
        <name>ATP</name>
        <dbReference type="ChEBI" id="CHEBI:30616"/>
    </ligand>
</feature>
<feature type="binding site" evidence="1">
    <location>
        <position position="153"/>
    </location>
    <ligand>
        <name>ATP</name>
        <dbReference type="ChEBI" id="CHEBI:30616"/>
    </ligand>
</feature>
<feature type="binding site" evidence="1">
    <location>
        <position position="154"/>
    </location>
    <ligand>
        <name>ATP</name>
        <dbReference type="ChEBI" id="CHEBI:30616"/>
    </ligand>
</feature>
<feature type="binding site" evidence="1">
    <location>
        <position position="155"/>
    </location>
    <ligand>
        <name>ATP</name>
        <dbReference type="ChEBI" id="CHEBI:30616"/>
    </ligand>
</feature>
<name>DNAA_CLOBK</name>
<protein>
    <recommendedName>
        <fullName evidence="1">Chromosomal replication initiator protein DnaA</fullName>
    </recommendedName>
</protein>
<proteinExistence type="inferred from homology"/>